<proteinExistence type="inferred from homology"/>
<keyword id="KW-0240">DNA-directed RNA polymerase</keyword>
<keyword id="KW-0548">Nucleotidyltransferase</keyword>
<keyword id="KW-1185">Reference proteome</keyword>
<keyword id="KW-0804">Transcription</keyword>
<keyword id="KW-0808">Transferase</keyword>
<evidence type="ECO:0000255" key="1">
    <source>
        <dbReference type="HAMAP-Rule" id="MF_01321"/>
    </source>
</evidence>
<dbReference type="EC" id="2.7.7.6" evidence="1"/>
<dbReference type="EMBL" id="CP000127">
    <property type="protein sequence ID" value="ABA58789.1"/>
    <property type="molecule type" value="Genomic_DNA"/>
</dbReference>
<dbReference type="RefSeq" id="WP_002808701.1">
    <property type="nucleotide sequence ID" value="NC_007484.1"/>
</dbReference>
<dbReference type="SMR" id="Q3J8Q7"/>
<dbReference type="FunCoup" id="Q3J8Q7">
    <property type="interactions" value="581"/>
</dbReference>
<dbReference type="STRING" id="323261.Noc_2331"/>
<dbReference type="KEGG" id="noc:Noc_2331"/>
<dbReference type="eggNOG" id="COG0085">
    <property type="taxonomic scope" value="Bacteria"/>
</dbReference>
<dbReference type="HOGENOM" id="CLU_000524_4_0_6"/>
<dbReference type="InParanoid" id="Q3J8Q7"/>
<dbReference type="Proteomes" id="UP000006838">
    <property type="component" value="Chromosome"/>
</dbReference>
<dbReference type="GO" id="GO:0000428">
    <property type="term" value="C:DNA-directed RNA polymerase complex"/>
    <property type="evidence" value="ECO:0007669"/>
    <property type="project" value="UniProtKB-KW"/>
</dbReference>
<dbReference type="GO" id="GO:0003677">
    <property type="term" value="F:DNA binding"/>
    <property type="evidence" value="ECO:0007669"/>
    <property type="project" value="UniProtKB-UniRule"/>
</dbReference>
<dbReference type="GO" id="GO:0003899">
    <property type="term" value="F:DNA-directed RNA polymerase activity"/>
    <property type="evidence" value="ECO:0007669"/>
    <property type="project" value="UniProtKB-UniRule"/>
</dbReference>
<dbReference type="GO" id="GO:0032549">
    <property type="term" value="F:ribonucleoside binding"/>
    <property type="evidence" value="ECO:0007669"/>
    <property type="project" value="InterPro"/>
</dbReference>
<dbReference type="GO" id="GO:0006351">
    <property type="term" value="P:DNA-templated transcription"/>
    <property type="evidence" value="ECO:0007669"/>
    <property type="project" value="UniProtKB-UniRule"/>
</dbReference>
<dbReference type="CDD" id="cd00653">
    <property type="entry name" value="RNA_pol_B_RPB2"/>
    <property type="match status" value="1"/>
</dbReference>
<dbReference type="FunFam" id="2.40.50.100:FF:000006">
    <property type="entry name" value="DNA-directed RNA polymerase subunit beta"/>
    <property type="match status" value="1"/>
</dbReference>
<dbReference type="FunFam" id="2.40.50.150:FF:000001">
    <property type="entry name" value="DNA-directed RNA polymerase subunit beta"/>
    <property type="match status" value="1"/>
</dbReference>
<dbReference type="FunFam" id="3.90.1800.10:FF:000001">
    <property type="entry name" value="DNA-directed RNA polymerase subunit beta"/>
    <property type="match status" value="1"/>
</dbReference>
<dbReference type="Gene3D" id="2.40.50.100">
    <property type="match status" value="1"/>
</dbReference>
<dbReference type="Gene3D" id="2.40.50.150">
    <property type="match status" value="1"/>
</dbReference>
<dbReference type="Gene3D" id="3.90.1100.10">
    <property type="match status" value="2"/>
</dbReference>
<dbReference type="Gene3D" id="2.30.150.10">
    <property type="entry name" value="DNA-directed RNA polymerase, beta subunit, external 1 domain"/>
    <property type="match status" value="1"/>
</dbReference>
<dbReference type="Gene3D" id="2.40.270.10">
    <property type="entry name" value="DNA-directed RNA polymerase, subunit 2, domain 6"/>
    <property type="match status" value="2"/>
</dbReference>
<dbReference type="Gene3D" id="3.90.1800.10">
    <property type="entry name" value="RNA polymerase alpha subunit dimerisation domain"/>
    <property type="match status" value="1"/>
</dbReference>
<dbReference type="Gene3D" id="3.90.1110.10">
    <property type="entry name" value="RNA polymerase Rpb2, domain 2"/>
    <property type="match status" value="2"/>
</dbReference>
<dbReference type="HAMAP" id="MF_01321">
    <property type="entry name" value="RNApol_bact_RpoB"/>
    <property type="match status" value="1"/>
</dbReference>
<dbReference type="InterPro" id="IPR042107">
    <property type="entry name" value="DNA-dir_RNA_pol_bsu_ext_1_sf"/>
</dbReference>
<dbReference type="InterPro" id="IPR019462">
    <property type="entry name" value="DNA-dir_RNA_pol_bsu_external_1"/>
</dbReference>
<dbReference type="InterPro" id="IPR015712">
    <property type="entry name" value="DNA-dir_RNA_pol_su2"/>
</dbReference>
<dbReference type="InterPro" id="IPR007120">
    <property type="entry name" value="DNA-dir_RNAP_su2_dom"/>
</dbReference>
<dbReference type="InterPro" id="IPR037033">
    <property type="entry name" value="DNA-dir_RNAP_su2_hyb_sf"/>
</dbReference>
<dbReference type="InterPro" id="IPR010243">
    <property type="entry name" value="RNA_pol_bsu_bac"/>
</dbReference>
<dbReference type="InterPro" id="IPR007121">
    <property type="entry name" value="RNA_pol_bsu_CS"/>
</dbReference>
<dbReference type="InterPro" id="IPR007644">
    <property type="entry name" value="RNA_pol_bsu_protrusion"/>
</dbReference>
<dbReference type="InterPro" id="IPR007642">
    <property type="entry name" value="RNA_pol_Rpb2_2"/>
</dbReference>
<dbReference type="InterPro" id="IPR037034">
    <property type="entry name" value="RNA_pol_Rpb2_2_sf"/>
</dbReference>
<dbReference type="InterPro" id="IPR007645">
    <property type="entry name" value="RNA_pol_Rpb2_3"/>
</dbReference>
<dbReference type="InterPro" id="IPR007641">
    <property type="entry name" value="RNA_pol_Rpb2_7"/>
</dbReference>
<dbReference type="InterPro" id="IPR014724">
    <property type="entry name" value="RNA_pol_RPB2_OB-fold"/>
</dbReference>
<dbReference type="NCBIfam" id="NF001616">
    <property type="entry name" value="PRK00405.1"/>
    <property type="match status" value="1"/>
</dbReference>
<dbReference type="NCBIfam" id="TIGR02013">
    <property type="entry name" value="rpoB"/>
    <property type="match status" value="1"/>
</dbReference>
<dbReference type="PANTHER" id="PTHR20856">
    <property type="entry name" value="DNA-DIRECTED RNA POLYMERASE I SUBUNIT 2"/>
    <property type="match status" value="1"/>
</dbReference>
<dbReference type="Pfam" id="PF04563">
    <property type="entry name" value="RNA_pol_Rpb2_1"/>
    <property type="match status" value="1"/>
</dbReference>
<dbReference type="Pfam" id="PF04561">
    <property type="entry name" value="RNA_pol_Rpb2_2"/>
    <property type="match status" value="2"/>
</dbReference>
<dbReference type="Pfam" id="PF04565">
    <property type="entry name" value="RNA_pol_Rpb2_3"/>
    <property type="match status" value="1"/>
</dbReference>
<dbReference type="Pfam" id="PF10385">
    <property type="entry name" value="RNA_pol_Rpb2_45"/>
    <property type="match status" value="1"/>
</dbReference>
<dbReference type="Pfam" id="PF00562">
    <property type="entry name" value="RNA_pol_Rpb2_6"/>
    <property type="match status" value="1"/>
</dbReference>
<dbReference type="Pfam" id="PF04560">
    <property type="entry name" value="RNA_pol_Rpb2_7"/>
    <property type="match status" value="1"/>
</dbReference>
<dbReference type="SUPFAM" id="SSF64484">
    <property type="entry name" value="beta and beta-prime subunits of DNA dependent RNA-polymerase"/>
    <property type="match status" value="1"/>
</dbReference>
<dbReference type="PROSITE" id="PS01166">
    <property type="entry name" value="RNA_POL_BETA"/>
    <property type="match status" value="1"/>
</dbReference>
<organism>
    <name type="scientific">Nitrosococcus oceani (strain ATCC 19707 / BCRC 17464 / JCM 30415 / NCIMB 11848 / C-107)</name>
    <dbReference type="NCBI Taxonomy" id="323261"/>
    <lineage>
        <taxon>Bacteria</taxon>
        <taxon>Pseudomonadati</taxon>
        <taxon>Pseudomonadota</taxon>
        <taxon>Gammaproteobacteria</taxon>
        <taxon>Chromatiales</taxon>
        <taxon>Chromatiaceae</taxon>
        <taxon>Nitrosococcus</taxon>
    </lineage>
</organism>
<name>RPOB_NITOC</name>
<sequence>MPYSLTEKKRIRKDFSKLHSILKTPFLLTIQIGSFLDFLQMDVPPGKRKDKGLHAAFKSVFPIKSYTEYAELQYSSYHLGVPSFEVKECQVRGLTYAAPLRVKLRLVIYDKESPASEQVVKDVKEQEVYMGEIPLMTPKGNFVINGTERVIVSQLHRSPGVIFEHDKGKTHSSGKLLFSARIIPYRGSWLDFEFDPKDCVYARIDRRRKLLATILLRALGYSTEEILIMFFETISVKRQGSSYLLDLVPQRLRGESLPFDIASPDGEVIVEAGRRVTARHIKQMEKAGMKTLPAPKEFLIGKTLARDLIDAGTGEVLAKANDEITAELMTALEDANIQAFDLIYTNDLDRGSFISDSLRLDPTTTPLEAQMEIYRVMRPGEPPTKEAAQNLFQNLFFNPERYDLSPVGRMKFNRRLGKEDITGPSILSKEDIVDVIKTLVDIRNGYGSVDDVDHLGNRRVRSVGEMAENQFRVGLVRVERAVRERLSLAESEGLMPQELINAKPVSAAVKEFFGSSQLSQFMDQNNPLSEVTHKRRVSALGPGGLTRERAGFEVRDVHPTHYGRVCPIETPEGPNIGLINSLAVYARINQYGFIETPYRKVVDGKVAGEVDYLSAIEEGQYVIAQANAAADEEGRLIDMLVSCRHKNEFTLLPPEKVQYIDVSPKQIVSVAASLIPFLEHDDANRALMGSNMQRQAVPTLRAETPLVGTGMEQVVARDSGVMVVARRGGIVDSVDAARVVVRVNDEETASDEPGVDIYNLIKYARSNQNTCINQSPLVKPGDTVAIGDVLADGPSTDMGELALGQNLLVAFMPWNGYNFEDSILISERVVEEDRFTSIHIEELTCFARDTKLGPEEISSDIPNVSEAALSKLDEAGIVYIGAEVKPGDILVGKVTPKGETQLTPEEKLLRAIFGEKASDVKDTSLRVSSGMQGTVIDVQVFTRDGVEKDTRALEIEEMELAKIKKDLRDEFRIVETDIYQRLEKVLVGKTVEGGPAELKAGTQITQNYLADLPRERWFEIRLRSEEAGRQLESVAGQLKEQRVAMDEKFQQQRAKLTSGHDLPPGVQKMVKVYLAVKRRVQPGDKMAGRHGNKGVISTIVPIEDMPYMEDGTPVDIVLNPLGVPSRMNIGQILETHLGWAAKGLGRKIGALLESGEQASELRVFLDRIYNASGKKEDLNSLSDEEVLELANNLKDGVPMATPVFDGASEQEIKTMLELADLPTNGQTNLYDGRSGEAFARPVTVGYMHMLKLNHLVDDKMHARSTGPYSLVTQQPLGGKAQFGGQRFGEMEVWALESYGAAYTLQEMLTVKSDDVNGRTKMYKNIVDGDYRMEAGMPESFNVLTKEIRALGIDIELEQD</sequence>
<reference key="1">
    <citation type="journal article" date="2006" name="Appl. Environ. Microbiol.">
        <title>Complete genome sequence of the marine, chemolithoautotrophic, ammonia-oxidizing bacterium Nitrosococcus oceani ATCC 19707.</title>
        <authorList>
            <person name="Klotz M.G."/>
            <person name="Arp D.J."/>
            <person name="Chain P.S.G."/>
            <person name="El-Sheikh A.F."/>
            <person name="Hauser L.J."/>
            <person name="Hommes N.G."/>
            <person name="Larimer F.W."/>
            <person name="Malfatti S.A."/>
            <person name="Norton J.M."/>
            <person name="Poret-Peterson A.T."/>
            <person name="Vergez L.M."/>
            <person name="Ward B.B."/>
        </authorList>
    </citation>
    <scope>NUCLEOTIDE SEQUENCE [LARGE SCALE GENOMIC DNA]</scope>
    <source>
        <strain>ATCC 19707 / BCRC 17464 / JCM 30415 / NCIMB 11848 / C-107</strain>
    </source>
</reference>
<accession>Q3J8Q7</accession>
<gene>
    <name evidence="1" type="primary">rpoB</name>
    <name type="ordered locus">Noc_2331</name>
</gene>
<comment type="function">
    <text evidence="1">DNA-dependent RNA polymerase catalyzes the transcription of DNA into RNA using the four ribonucleoside triphosphates as substrates.</text>
</comment>
<comment type="catalytic activity">
    <reaction evidence="1">
        <text>RNA(n) + a ribonucleoside 5'-triphosphate = RNA(n+1) + diphosphate</text>
        <dbReference type="Rhea" id="RHEA:21248"/>
        <dbReference type="Rhea" id="RHEA-COMP:14527"/>
        <dbReference type="Rhea" id="RHEA-COMP:17342"/>
        <dbReference type="ChEBI" id="CHEBI:33019"/>
        <dbReference type="ChEBI" id="CHEBI:61557"/>
        <dbReference type="ChEBI" id="CHEBI:140395"/>
        <dbReference type="EC" id="2.7.7.6"/>
    </reaction>
</comment>
<comment type="subunit">
    <text evidence="1">The RNAP catalytic core consists of 2 alpha, 1 beta, 1 beta' and 1 omega subunit. When a sigma factor is associated with the core the holoenzyme is formed, which can initiate transcription.</text>
</comment>
<comment type="similarity">
    <text evidence="1">Belongs to the RNA polymerase beta chain family.</text>
</comment>
<protein>
    <recommendedName>
        <fullName evidence="1">DNA-directed RNA polymerase subunit beta</fullName>
        <shortName evidence="1">RNAP subunit beta</shortName>
        <ecNumber evidence="1">2.7.7.6</ecNumber>
    </recommendedName>
    <alternativeName>
        <fullName evidence="1">RNA polymerase subunit beta</fullName>
    </alternativeName>
    <alternativeName>
        <fullName evidence="1">Transcriptase subunit beta</fullName>
    </alternativeName>
</protein>
<feature type="chain" id="PRO_0000224083" description="DNA-directed RNA polymerase subunit beta">
    <location>
        <begin position="1"/>
        <end position="1359"/>
    </location>
</feature>